<name>RL2_AERHH</name>
<reference key="1">
    <citation type="journal article" date="2006" name="J. Bacteriol.">
        <title>Genome sequence of Aeromonas hydrophila ATCC 7966T: jack of all trades.</title>
        <authorList>
            <person name="Seshadri R."/>
            <person name="Joseph S.W."/>
            <person name="Chopra A.K."/>
            <person name="Sha J."/>
            <person name="Shaw J."/>
            <person name="Graf J."/>
            <person name="Haft D.H."/>
            <person name="Wu M."/>
            <person name="Ren Q."/>
            <person name="Rosovitz M.J."/>
            <person name="Madupu R."/>
            <person name="Tallon L."/>
            <person name="Kim M."/>
            <person name="Jin S."/>
            <person name="Vuong H."/>
            <person name="Stine O.C."/>
            <person name="Ali A."/>
            <person name="Horneman A.J."/>
            <person name="Heidelberg J.F."/>
        </authorList>
    </citation>
    <scope>NUCLEOTIDE SEQUENCE [LARGE SCALE GENOMIC DNA]</scope>
    <source>
        <strain>ATCC 7966 / DSM 30187 / BCRC 13018 / CCUG 14551 / JCM 1027 / KCTC 2358 / NCIMB 9240 / NCTC 8049</strain>
    </source>
</reference>
<evidence type="ECO:0000255" key="1">
    <source>
        <dbReference type="HAMAP-Rule" id="MF_01320"/>
    </source>
</evidence>
<evidence type="ECO:0000256" key="2">
    <source>
        <dbReference type="SAM" id="MobiDB-lite"/>
    </source>
</evidence>
<evidence type="ECO:0000305" key="3"/>
<dbReference type="EMBL" id="CP000462">
    <property type="protein sequence ID" value="ABK36495.1"/>
    <property type="molecule type" value="Genomic_DNA"/>
</dbReference>
<dbReference type="RefSeq" id="WP_005307957.1">
    <property type="nucleotide sequence ID" value="NC_008570.1"/>
</dbReference>
<dbReference type="RefSeq" id="YP_854842.1">
    <property type="nucleotide sequence ID" value="NC_008570.1"/>
</dbReference>
<dbReference type="SMR" id="A0KF24"/>
<dbReference type="STRING" id="380703.AHA_0312"/>
<dbReference type="EnsemblBacteria" id="ABK36495">
    <property type="protein sequence ID" value="ABK36495"/>
    <property type="gene ID" value="AHA_0312"/>
</dbReference>
<dbReference type="GeneID" id="47843589"/>
<dbReference type="KEGG" id="aha:AHA_0312"/>
<dbReference type="PATRIC" id="fig|380703.7.peg.301"/>
<dbReference type="eggNOG" id="COG0090">
    <property type="taxonomic scope" value="Bacteria"/>
</dbReference>
<dbReference type="HOGENOM" id="CLU_036235_2_1_6"/>
<dbReference type="OrthoDB" id="9778722at2"/>
<dbReference type="PRO" id="PR:A0KF24"/>
<dbReference type="Proteomes" id="UP000000756">
    <property type="component" value="Chromosome"/>
</dbReference>
<dbReference type="GO" id="GO:0015934">
    <property type="term" value="C:large ribosomal subunit"/>
    <property type="evidence" value="ECO:0007669"/>
    <property type="project" value="InterPro"/>
</dbReference>
<dbReference type="GO" id="GO:0019843">
    <property type="term" value="F:rRNA binding"/>
    <property type="evidence" value="ECO:0007669"/>
    <property type="project" value="UniProtKB-UniRule"/>
</dbReference>
<dbReference type="GO" id="GO:0003735">
    <property type="term" value="F:structural constituent of ribosome"/>
    <property type="evidence" value="ECO:0007669"/>
    <property type="project" value="InterPro"/>
</dbReference>
<dbReference type="GO" id="GO:0016740">
    <property type="term" value="F:transferase activity"/>
    <property type="evidence" value="ECO:0007669"/>
    <property type="project" value="InterPro"/>
</dbReference>
<dbReference type="GO" id="GO:0002181">
    <property type="term" value="P:cytoplasmic translation"/>
    <property type="evidence" value="ECO:0007669"/>
    <property type="project" value="TreeGrafter"/>
</dbReference>
<dbReference type="FunFam" id="2.30.30.30:FF:000001">
    <property type="entry name" value="50S ribosomal protein L2"/>
    <property type="match status" value="1"/>
</dbReference>
<dbReference type="FunFam" id="2.40.50.140:FF:000003">
    <property type="entry name" value="50S ribosomal protein L2"/>
    <property type="match status" value="1"/>
</dbReference>
<dbReference type="FunFam" id="4.10.950.10:FF:000001">
    <property type="entry name" value="50S ribosomal protein L2"/>
    <property type="match status" value="1"/>
</dbReference>
<dbReference type="Gene3D" id="2.30.30.30">
    <property type="match status" value="1"/>
</dbReference>
<dbReference type="Gene3D" id="2.40.50.140">
    <property type="entry name" value="Nucleic acid-binding proteins"/>
    <property type="match status" value="1"/>
</dbReference>
<dbReference type="Gene3D" id="4.10.950.10">
    <property type="entry name" value="Ribosomal protein L2, domain 3"/>
    <property type="match status" value="1"/>
</dbReference>
<dbReference type="HAMAP" id="MF_01320_B">
    <property type="entry name" value="Ribosomal_uL2_B"/>
    <property type="match status" value="1"/>
</dbReference>
<dbReference type="InterPro" id="IPR012340">
    <property type="entry name" value="NA-bd_OB-fold"/>
</dbReference>
<dbReference type="InterPro" id="IPR014722">
    <property type="entry name" value="Rib_uL2_dom2"/>
</dbReference>
<dbReference type="InterPro" id="IPR002171">
    <property type="entry name" value="Ribosomal_uL2"/>
</dbReference>
<dbReference type="InterPro" id="IPR005880">
    <property type="entry name" value="Ribosomal_uL2_bac/org-type"/>
</dbReference>
<dbReference type="InterPro" id="IPR022669">
    <property type="entry name" value="Ribosomal_uL2_C"/>
</dbReference>
<dbReference type="InterPro" id="IPR014726">
    <property type="entry name" value="Ribosomal_uL2_dom3"/>
</dbReference>
<dbReference type="InterPro" id="IPR022666">
    <property type="entry name" value="Ribosomal_uL2_RNA-bd_dom"/>
</dbReference>
<dbReference type="InterPro" id="IPR008991">
    <property type="entry name" value="Translation_prot_SH3-like_sf"/>
</dbReference>
<dbReference type="NCBIfam" id="TIGR01171">
    <property type="entry name" value="rplB_bact"/>
    <property type="match status" value="1"/>
</dbReference>
<dbReference type="PANTHER" id="PTHR13691:SF5">
    <property type="entry name" value="LARGE RIBOSOMAL SUBUNIT PROTEIN UL2M"/>
    <property type="match status" value="1"/>
</dbReference>
<dbReference type="PANTHER" id="PTHR13691">
    <property type="entry name" value="RIBOSOMAL PROTEIN L2"/>
    <property type="match status" value="1"/>
</dbReference>
<dbReference type="Pfam" id="PF00181">
    <property type="entry name" value="Ribosomal_L2"/>
    <property type="match status" value="1"/>
</dbReference>
<dbReference type="Pfam" id="PF03947">
    <property type="entry name" value="Ribosomal_L2_C"/>
    <property type="match status" value="1"/>
</dbReference>
<dbReference type="PIRSF" id="PIRSF002158">
    <property type="entry name" value="Ribosomal_L2"/>
    <property type="match status" value="1"/>
</dbReference>
<dbReference type="SMART" id="SM01383">
    <property type="entry name" value="Ribosomal_L2"/>
    <property type="match status" value="1"/>
</dbReference>
<dbReference type="SMART" id="SM01382">
    <property type="entry name" value="Ribosomal_L2_C"/>
    <property type="match status" value="1"/>
</dbReference>
<dbReference type="SUPFAM" id="SSF50249">
    <property type="entry name" value="Nucleic acid-binding proteins"/>
    <property type="match status" value="1"/>
</dbReference>
<dbReference type="SUPFAM" id="SSF50104">
    <property type="entry name" value="Translation proteins SH3-like domain"/>
    <property type="match status" value="1"/>
</dbReference>
<sequence>MAIVKCKPTSPGRRHVVKIVNQDLYKGKPFAALLDKKDKSGGRNNNGRITTRHIGGGHKQHYRIVDFKRDKDGIPAKVERLEYDPNRTANIALVLYADGERRYILAPKGLKAGDAIASGADAAIKVGNTLPMRNIPVGSTVHAVEMKPGKGAQLARSAGTFIQILAREGNYVTLRLRSGEVRKVLAECRATIGEVGNSEHMLRQLGKAGANRWRGIRPTVRGMAMNPVDHPHGGGEGRNKGMQPVSPWGQKAKGFKTRKNKRTDKYIVRRRNK</sequence>
<gene>
    <name evidence="1" type="primary">rplB</name>
    <name type="ordered locus">AHA_0312</name>
</gene>
<protein>
    <recommendedName>
        <fullName evidence="1">Large ribosomal subunit protein uL2</fullName>
    </recommendedName>
    <alternativeName>
        <fullName evidence="3">50S ribosomal protein L2</fullName>
    </alternativeName>
</protein>
<organism>
    <name type="scientific">Aeromonas hydrophila subsp. hydrophila (strain ATCC 7966 / DSM 30187 / BCRC 13018 / CCUG 14551 / JCM 1027 / KCTC 2358 / NCIMB 9240 / NCTC 8049)</name>
    <dbReference type="NCBI Taxonomy" id="380703"/>
    <lineage>
        <taxon>Bacteria</taxon>
        <taxon>Pseudomonadati</taxon>
        <taxon>Pseudomonadota</taxon>
        <taxon>Gammaproteobacteria</taxon>
        <taxon>Aeromonadales</taxon>
        <taxon>Aeromonadaceae</taxon>
        <taxon>Aeromonas</taxon>
    </lineage>
</organism>
<proteinExistence type="inferred from homology"/>
<accession>A0KF24</accession>
<feature type="chain" id="PRO_0000309863" description="Large ribosomal subunit protein uL2">
    <location>
        <begin position="1"/>
        <end position="273"/>
    </location>
</feature>
<feature type="region of interest" description="Disordered" evidence="2">
    <location>
        <begin position="35"/>
        <end position="54"/>
    </location>
</feature>
<feature type="region of interest" description="Disordered" evidence="2">
    <location>
        <begin position="222"/>
        <end position="273"/>
    </location>
</feature>
<feature type="compositionally biased region" description="Basic and acidic residues" evidence="2">
    <location>
        <begin position="229"/>
        <end position="239"/>
    </location>
</feature>
<feature type="compositionally biased region" description="Basic residues" evidence="2">
    <location>
        <begin position="253"/>
        <end position="273"/>
    </location>
</feature>
<keyword id="KW-1185">Reference proteome</keyword>
<keyword id="KW-0687">Ribonucleoprotein</keyword>
<keyword id="KW-0689">Ribosomal protein</keyword>
<keyword id="KW-0694">RNA-binding</keyword>
<keyword id="KW-0699">rRNA-binding</keyword>
<comment type="function">
    <text evidence="1">One of the primary rRNA binding proteins. Required for association of the 30S and 50S subunits to form the 70S ribosome, for tRNA binding and peptide bond formation. It has been suggested to have peptidyltransferase activity; this is somewhat controversial. Makes several contacts with the 16S rRNA in the 70S ribosome.</text>
</comment>
<comment type="subunit">
    <text evidence="1">Part of the 50S ribosomal subunit. Forms a bridge to the 30S subunit in the 70S ribosome.</text>
</comment>
<comment type="similarity">
    <text evidence="1">Belongs to the universal ribosomal protein uL2 family.</text>
</comment>